<accession>C3NHQ1</accession>
<keyword id="KW-0067">ATP-binding</keyword>
<keyword id="KW-0436">Ligase</keyword>
<keyword id="KW-0547">Nucleotide-binding</keyword>
<keyword id="KW-0648">Protein biosynthesis</keyword>
<reference key="1">
    <citation type="journal article" date="2009" name="Proc. Natl. Acad. Sci. U.S.A.">
        <title>Biogeography of the Sulfolobus islandicus pan-genome.</title>
        <authorList>
            <person name="Reno M.L."/>
            <person name="Held N.L."/>
            <person name="Fields C.J."/>
            <person name="Burke P.V."/>
            <person name="Whitaker R.J."/>
        </authorList>
    </citation>
    <scope>NUCLEOTIDE SEQUENCE [LARGE SCALE GENOMIC DNA]</scope>
    <source>
        <strain>Y.N.15.51 / Yellowstone #2</strain>
    </source>
</reference>
<evidence type="ECO:0000255" key="1">
    <source>
        <dbReference type="HAMAP-Rule" id="MF_00588"/>
    </source>
</evidence>
<proteinExistence type="inferred from homology"/>
<comment type="function">
    <text evidence="1">Allows the formation of correctly charged Gln-tRNA(Gln) through the transamidation of misacylated Glu-tRNA(Gln) in organisms which lack glutaminyl-tRNA synthetase. The reaction takes place in the presence of glutamine and ATP through an activated gamma-phospho-Glu-tRNA(Gln). The GatDE system is specific for glutamate and does not act on aspartate.</text>
</comment>
<comment type="catalytic activity">
    <reaction evidence="1">
        <text>L-glutamyl-tRNA(Gln) + L-glutamine + ATP + H2O = L-glutaminyl-tRNA(Gln) + L-glutamate + ADP + phosphate + H(+)</text>
        <dbReference type="Rhea" id="RHEA:17521"/>
        <dbReference type="Rhea" id="RHEA-COMP:9681"/>
        <dbReference type="Rhea" id="RHEA-COMP:9684"/>
        <dbReference type="ChEBI" id="CHEBI:15377"/>
        <dbReference type="ChEBI" id="CHEBI:15378"/>
        <dbReference type="ChEBI" id="CHEBI:29985"/>
        <dbReference type="ChEBI" id="CHEBI:30616"/>
        <dbReference type="ChEBI" id="CHEBI:43474"/>
        <dbReference type="ChEBI" id="CHEBI:58359"/>
        <dbReference type="ChEBI" id="CHEBI:78520"/>
        <dbReference type="ChEBI" id="CHEBI:78521"/>
        <dbReference type="ChEBI" id="CHEBI:456216"/>
    </reaction>
</comment>
<comment type="subunit">
    <text evidence="1">Heterodimer of GatD and GatE.</text>
</comment>
<comment type="similarity">
    <text evidence="1">Belongs to the GatB/GatE family. GatE subfamily.</text>
</comment>
<dbReference type="EC" id="6.3.5.-" evidence="1"/>
<dbReference type="EMBL" id="CP001404">
    <property type="protein sequence ID" value="ACP48661.1"/>
    <property type="molecule type" value="Genomic_DNA"/>
</dbReference>
<dbReference type="RefSeq" id="WP_012711296.1">
    <property type="nucleotide sequence ID" value="NC_012623.1"/>
</dbReference>
<dbReference type="SMR" id="C3NHQ1"/>
<dbReference type="GeneID" id="7941021"/>
<dbReference type="KEGG" id="sin:YN1551_1573"/>
<dbReference type="HOGENOM" id="CLU_030702_0_0_2"/>
<dbReference type="Proteomes" id="UP000006818">
    <property type="component" value="Chromosome"/>
</dbReference>
<dbReference type="GO" id="GO:0005737">
    <property type="term" value="C:cytoplasm"/>
    <property type="evidence" value="ECO:0007669"/>
    <property type="project" value="InterPro"/>
</dbReference>
<dbReference type="GO" id="GO:0004812">
    <property type="term" value="F:aminoacyl-tRNA ligase activity"/>
    <property type="evidence" value="ECO:0007669"/>
    <property type="project" value="InterPro"/>
</dbReference>
<dbReference type="GO" id="GO:0005524">
    <property type="term" value="F:ATP binding"/>
    <property type="evidence" value="ECO:0007669"/>
    <property type="project" value="UniProtKB-KW"/>
</dbReference>
<dbReference type="GO" id="GO:0050567">
    <property type="term" value="F:glutaminyl-tRNA synthase (glutamine-hydrolyzing) activity"/>
    <property type="evidence" value="ECO:0007669"/>
    <property type="project" value="UniProtKB-UniRule"/>
</dbReference>
<dbReference type="GO" id="GO:0070681">
    <property type="term" value="P:glutaminyl-tRNAGln biosynthesis via transamidation"/>
    <property type="evidence" value="ECO:0007669"/>
    <property type="project" value="TreeGrafter"/>
</dbReference>
<dbReference type="GO" id="GO:0006412">
    <property type="term" value="P:translation"/>
    <property type="evidence" value="ECO:0007669"/>
    <property type="project" value="UniProtKB-UniRule"/>
</dbReference>
<dbReference type="FunFam" id="1.10.150.380:FF:000002">
    <property type="entry name" value="Glutamyl-tRNA(Gln) amidotransferase subunit E"/>
    <property type="match status" value="1"/>
</dbReference>
<dbReference type="FunFam" id="3.30.1360.30:FF:000003">
    <property type="entry name" value="Glutamyl-tRNA(Gln) amidotransferase subunit E"/>
    <property type="match status" value="1"/>
</dbReference>
<dbReference type="Gene3D" id="1.10.10.410">
    <property type="match status" value="1"/>
</dbReference>
<dbReference type="Gene3D" id="3.30.1360.30">
    <property type="entry name" value="GAD-like domain"/>
    <property type="match status" value="1"/>
</dbReference>
<dbReference type="Gene3D" id="1.10.150.380">
    <property type="entry name" value="GatB domain, N-terminal subdomain"/>
    <property type="match status" value="1"/>
</dbReference>
<dbReference type="HAMAP" id="MF_00588">
    <property type="entry name" value="GatE"/>
    <property type="match status" value="1"/>
</dbReference>
<dbReference type="InterPro" id="IPR017959">
    <property type="entry name" value="Asn/Gln-tRNA_amidoTrfase_suB/E"/>
</dbReference>
<dbReference type="InterPro" id="IPR006075">
    <property type="entry name" value="Asn/Gln-tRNA_Trfase_suB/E_cat"/>
</dbReference>
<dbReference type="InterPro" id="IPR018027">
    <property type="entry name" value="Asn/Gln_amidotransferase"/>
</dbReference>
<dbReference type="InterPro" id="IPR003789">
    <property type="entry name" value="Asn/Gln_tRNA_amidoTrase-B-like"/>
</dbReference>
<dbReference type="InterPro" id="IPR004115">
    <property type="entry name" value="GAD-like_sf"/>
</dbReference>
<dbReference type="InterPro" id="IPR029351">
    <property type="entry name" value="GAD_dom"/>
</dbReference>
<dbReference type="InterPro" id="IPR042114">
    <property type="entry name" value="GatB_C_1"/>
</dbReference>
<dbReference type="InterPro" id="IPR023168">
    <property type="entry name" value="GatB_Yqey_C_2"/>
</dbReference>
<dbReference type="InterPro" id="IPR004414">
    <property type="entry name" value="GatE"/>
</dbReference>
<dbReference type="InterPro" id="IPR017958">
    <property type="entry name" value="Gln-tRNA_amidoTrfase_suB_CS"/>
</dbReference>
<dbReference type="InterPro" id="IPR014746">
    <property type="entry name" value="Gln_synth/guanido_kin_cat_dom"/>
</dbReference>
<dbReference type="NCBIfam" id="TIGR00134">
    <property type="entry name" value="gatE_arch"/>
    <property type="match status" value="1"/>
</dbReference>
<dbReference type="NCBIfam" id="NF003107">
    <property type="entry name" value="PRK04028.1"/>
    <property type="match status" value="1"/>
</dbReference>
<dbReference type="PANTHER" id="PTHR11659">
    <property type="entry name" value="GLUTAMYL-TRNA GLN AMIDOTRANSFERASE SUBUNIT B MITOCHONDRIAL AND PROKARYOTIC PET112-RELATED"/>
    <property type="match status" value="1"/>
</dbReference>
<dbReference type="PANTHER" id="PTHR11659:SF2">
    <property type="entry name" value="GLUTAMYL-TRNA(GLN) AMIDOTRANSFERASE SUBUNIT E"/>
    <property type="match status" value="1"/>
</dbReference>
<dbReference type="Pfam" id="PF02938">
    <property type="entry name" value="GAD"/>
    <property type="match status" value="1"/>
</dbReference>
<dbReference type="Pfam" id="PF02934">
    <property type="entry name" value="GatB_N"/>
    <property type="match status" value="1"/>
</dbReference>
<dbReference type="Pfam" id="PF02637">
    <property type="entry name" value="GatB_Yqey"/>
    <property type="match status" value="1"/>
</dbReference>
<dbReference type="SMART" id="SM00845">
    <property type="entry name" value="GatB_Yqey"/>
    <property type="match status" value="1"/>
</dbReference>
<dbReference type="SUPFAM" id="SSF55261">
    <property type="entry name" value="GAD domain-like"/>
    <property type="match status" value="1"/>
</dbReference>
<dbReference type="SUPFAM" id="SSF89095">
    <property type="entry name" value="GatB/YqeY motif"/>
    <property type="match status" value="1"/>
</dbReference>
<dbReference type="SUPFAM" id="SSF55931">
    <property type="entry name" value="Glutamine synthetase/guanido kinase"/>
    <property type="match status" value="1"/>
</dbReference>
<dbReference type="PROSITE" id="PS01234">
    <property type="entry name" value="GATB"/>
    <property type="match status" value="1"/>
</dbReference>
<name>GATE_SACI1</name>
<organism>
    <name type="scientific">Saccharolobus islandicus (strain Y.N.15.51 / Yellowstone #2)</name>
    <name type="common">Sulfolobus islandicus</name>
    <dbReference type="NCBI Taxonomy" id="419942"/>
    <lineage>
        <taxon>Archaea</taxon>
        <taxon>Thermoproteota</taxon>
        <taxon>Thermoprotei</taxon>
        <taxon>Sulfolobales</taxon>
        <taxon>Sulfolobaceae</taxon>
        <taxon>Saccharolobus</taxon>
    </lineage>
</organism>
<sequence length="633" mass="71528">MSELNYEELGLKVGLEIHQQLNTSHKLFCNCSTNLKEDYKLTLERYLRPALSELGEVDVAALFEWKKGKKYVYRIPITTSCLVEADEEPPHAINEEALKIALAIAIALNSNIVDEIYVMRKIVIDGSNTTGFQRTAIVALGGMLKDEGVTIQTIAVEEDAARKIDERTDQVTYSLDRLGIPLIEISTGPDIRSPEQAERVALKIGQLLRMTGKVKRGIGTIRQDLNISIKGGTKIEIKGVQKLELIPDIVRYEAMRQFNLLKIKEELNKRGVSKNLILSNFVVKDLTELFKNTNSKIIKSGIEKGGLVYGIRAYKLKGILGWELIPKKRRFGTEIADYVRALAELGGLFHSDELPNYGITEEEINKVREALNATTEDGFILIVGERERLDKAVEVIRDRILLAFDGIPKETRGALDDGTTKFLRPQPSSARMYPETDIPPRRIDEKLLEDAKKFVPESPESKMKRYITLGLSEELAKEIIRDPRLDLFEELVNKYSPKVSPVVIASTITNTLKYVKSKGGDISKINEEDIEELIKSVYENKISKDSISEILLEYTTNKNVELKDVIRKYEALPTEELEKIIDDVISSNLDEIRKRKDKAVNLIMSKVMSKVKGRAEGKVILELIKSRLKNVME</sequence>
<protein>
    <recommendedName>
        <fullName evidence="1">Glutamyl-tRNA(Gln) amidotransferase subunit E</fullName>
        <shortName evidence="1">Glu-ADT subunit E</shortName>
        <ecNumber evidence="1">6.3.5.-</ecNumber>
    </recommendedName>
</protein>
<feature type="chain" id="PRO_1000212160" description="Glutamyl-tRNA(Gln) amidotransferase subunit E">
    <location>
        <begin position="1"/>
        <end position="633"/>
    </location>
</feature>
<gene>
    <name evidence="1" type="primary">gatE</name>
    <name type="ordered locus">YN1551_1573</name>
</gene>